<protein>
    <recommendedName>
        <fullName evidence="1">Small ribosomal subunit protein bS16</fullName>
    </recommendedName>
    <alternativeName>
        <fullName evidence="2">30S ribosomal protein S16</fullName>
    </alternativeName>
</protein>
<proteinExistence type="inferred from homology"/>
<dbReference type="EMBL" id="CP000440">
    <property type="protein sequence ID" value="ABI86504.1"/>
    <property type="molecule type" value="Genomic_DNA"/>
</dbReference>
<dbReference type="RefSeq" id="WP_006476550.1">
    <property type="nucleotide sequence ID" value="NZ_CP009798.1"/>
</dbReference>
<dbReference type="SMR" id="Q0BH69"/>
<dbReference type="GeneID" id="98102517"/>
<dbReference type="KEGG" id="bam:Bamb_0945"/>
<dbReference type="PATRIC" id="fig|339670.21.peg.629"/>
<dbReference type="eggNOG" id="COG0228">
    <property type="taxonomic scope" value="Bacteria"/>
</dbReference>
<dbReference type="Proteomes" id="UP000000662">
    <property type="component" value="Chromosome 1"/>
</dbReference>
<dbReference type="GO" id="GO:0005737">
    <property type="term" value="C:cytoplasm"/>
    <property type="evidence" value="ECO:0007669"/>
    <property type="project" value="UniProtKB-ARBA"/>
</dbReference>
<dbReference type="GO" id="GO:0015935">
    <property type="term" value="C:small ribosomal subunit"/>
    <property type="evidence" value="ECO:0007669"/>
    <property type="project" value="TreeGrafter"/>
</dbReference>
<dbReference type="GO" id="GO:0003735">
    <property type="term" value="F:structural constituent of ribosome"/>
    <property type="evidence" value="ECO:0007669"/>
    <property type="project" value="InterPro"/>
</dbReference>
<dbReference type="GO" id="GO:0006412">
    <property type="term" value="P:translation"/>
    <property type="evidence" value="ECO:0007669"/>
    <property type="project" value="UniProtKB-UniRule"/>
</dbReference>
<dbReference type="Gene3D" id="3.30.1320.10">
    <property type="match status" value="1"/>
</dbReference>
<dbReference type="HAMAP" id="MF_00385">
    <property type="entry name" value="Ribosomal_bS16"/>
    <property type="match status" value="1"/>
</dbReference>
<dbReference type="InterPro" id="IPR000307">
    <property type="entry name" value="Ribosomal_bS16"/>
</dbReference>
<dbReference type="InterPro" id="IPR023803">
    <property type="entry name" value="Ribosomal_bS16_dom_sf"/>
</dbReference>
<dbReference type="NCBIfam" id="TIGR00002">
    <property type="entry name" value="S16"/>
    <property type="match status" value="1"/>
</dbReference>
<dbReference type="PANTHER" id="PTHR12919">
    <property type="entry name" value="30S RIBOSOMAL PROTEIN S16"/>
    <property type="match status" value="1"/>
</dbReference>
<dbReference type="PANTHER" id="PTHR12919:SF20">
    <property type="entry name" value="SMALL RIBOSOMAL SUBUNIT PROTEIN BS16M"/>
    <property type="match status" value="1"/>
</dbReference>
<dbReference type="Pfam" id="PF00886">
    <property type="entry name" value="Ribosomal_S16"/>
    <property type="match status" value="1"/>
</dbReference>
<dbReference type="SUPFAM" id="SSF54565">
    <property type="entry name" value="Ribosomal protein S16"/>
    <property type="match status" value="1"/>
</dbReference>
<accession>Q0BH69</accession>
<evidence type="ECO:0000255" key="1">
    <source>
        <dbReference type="HAMAP-Rule" id="MF_00385"/>
    </source>
</evidence>
<evidence type="ECO:0000305" key="2"/>
<reference key="1">
    <citation type="submission" date="2006-08" db="EMBL/GenBank/DDBJ databases">
        <title>Complete sequence of chromosome 1 of Burkholderia cepacia AMMD.</title>
        <authorList>
            <person name="Copeland A."/>
            <person name="Lucas S."/>
            <person name="Lapidus A."/>
            <person name="Barry K."/>
            <person name="Detter J.C."/>
            <person name="Glavina del Rio T."/>
            <person name="Hammon N."/>
            <person name="Israni S."/>
            <person name="Pitluck S."/>
            <person name="Bruce D."/>
            <person name="Chain P."/>
            <person name="Malfatti S."/>
            <person name="Shin M."/>
            <person name="Vergez L."/>
            <person name="Schmutz J."/>
            <person name="Larimer F."/>
            <person name="Land M."/>
            <person name="Hauser L."/>
            <person name="Kyrpides N."/>
            <person name="Kim E."/>
            <person name="Parke J."/>
            <person name="Coenye T."/>
            <person name="Konstantinidis K."/>
            <person name="Ramette A."/>
            <person name="Tiedje J."/>
            <person name="Richardson P."/>
        </authorList>
    </citation>
    <scope>NUCLEOTIDE SEQUENCE [LARGE SCALE GENOMIC DNA]</scope>
    <source>
        <strain>ATCC BAA-244 / DSM 16087 / CCUG 44356 / LMG 19182 / AMMD</strain>
    </source>
</reference>
<sequence length="84" mass="9475">MVIIRLARGGSKKRPFYNIVATDSRNRRDGRFIERVGFYNPVATKGESLRIAQDRLTYWQGVGAQLSPTVQRLVKEAQKAQPAA</sequence>
<feature type="chain" id="PRO_1000049225" description="Small ribosomal subunit protein bS16">
    <location>
        <begin position="1"/>
        <end position="84"/>
    </location>
</feature>
<name>RS16_BURCM</name>
<organism>
    <name type="scientific">Burkholderia ambifaria (strain ATCC BAA-244 / DSM 16087 / CCUG 44356 / LMG 19182 / AMMD)</name>
    <name type="common">Burkholderia cepacia (strain AMMD)</name>
    <dbReference type="NCBI Taxonomy" id="339670"/>
    <lineage>
        <taxon>Bacteria</taxon>
        <taxon>Pseudomonadati</taxon>
        <taxon>Pseudomonadota</taxon>
        <taxon>Betaproteobacteria</taxon>
        <taxon>Burkholderiales</taxon>
        <taxon>Burkholderiaceae</taxon>
        <taxon>Burkholderia</taxon>
        <taxon>Burkholderia cepacia complex</taxon>
    </lineage>
</organism>
<gene>
    <name evidence="1" type="primary">rpsP</name>
    <name type="ordered locus">Bamb_0945</name>
</gene>
<keyword id="KW-0687">Ribonucleoprotein</keyword>
<keyword id="KW-0689">Ribosomal protein</keyword>
<comment type="similarity">
    <text evidence="1">Belongs to the bacterial ribosomal protein bS16 family.</text>
</comment>